<sequence length="265" mass="28826">MTDALIRLEQVAVTLSGQSVLDNIQLSVKPGEIVTLIGPNGAGKTTLVRAVLGLLKPDSGTVWRKPKLRVGYMPQKLHVDQTLPLSVLRFLRLVPGVDRMAAESALEEVGAEKVIDSPIQGISGGEMQRVLLARALLRKPELLVLDEPVQGVDVAGQAELYGLITRLRDRHQCGVLMVSHDLHLVMSTTDQVVCLNRHVCCSGHPEHVSHDPAFVELFGKNAQSLAIYHHHHDHAHDLHGAVVNDAPATSSHTHTHVHGDHCKHG</sequence>
<protein>
    <recommendedName>
        <fullName evidence="1">Zinc import ATP-binding protein ZnuC</fullName>
        <ecNumber evidence="1">7.2.2.20</ecNumber>
    </recommendedName>
</protein>
<name>ZNUC_PSE14</name>
<reference key="1">
    <citation type="journal article" date="2005" name="J. Bacteriol.">
        <title>Whole-genome sequence analysis of Pseudomonas syringae pv. phaseolicola 1448A reveals divergence among pathovars in genes involved in virulence and transposition.</title>
        <authorList>
            <person name="Joardar V."/>
            <person name="Lindeberg M."/>
            <person name="Jackson R.W."/>
            <person name="Selengut J."/>
            <person name="Dodson R."/>
            <person name="Brinkac L.M."/>
            <person name="Daugherty S.C."/>
            <person name="DeBoy R.T."/>
            <person name="Durkin A.S."/>
            <person name="Gwinn Giglio M."/>
            <person name="Madupu R."/>
            <person name="Nelson W.C."/>
            <person name="Rosovitz M.J."/>
            <person name="Sullivan S.A."/>
            <person name="Crabtree J."/>
            <person name="Creasy T."/>
            <person name="Davidsen T.M."/>
            <person name="Haft D.H."/>
            <person name="Zafar N."/>
            <person name="Zhou L."/>
            <person name="Halpin R."/>
            <person name="Holley T."/>
            <person name="Khouri H.M."/>
            <person name="Feldblyum T.V."/>
            <person name="White O."/>
            <person name="Fraser C.M."/>
            <person name="Chatterjee A.K."/>
            <person name="Cartinhour S."/>
            <person name="Schneider D."/>
            <person name="Mansfield J.W."/>
            <person name="Collmer A."/>
            <person name="Buell R."/>
        </authorList>
    </citation>
    <scope>NUCLEOTIDE SEQUENCE [LARGE SCALE GENOMIC DNA]</scope>
    <source>
        <strain>1448A / Race 6</strain>
    </source>
</reference>
<keyword id="KW-0067">ATP-binding</keyword>
<keyword id="KW-0997">Cell inner membrane</keyword>
<keyword id="KW-1003">Cell membrane</keyword>
<keyword id="KW-0406">Ion transport</keyword>
<keyword id="KW-0472">Membrane</keyword>
<keyword id="KW-0547">Nucleotide-binding</keyword>
<keyword id="KW-1278">Translocase</keyword>
<keyword id="KW-0813">Transport</keyword>
<keyword id="KW-0862">Zinc</keyword>
<keyword id="KW-0864">Zinc transport</keyword>
<gene>
    <name evidence="1" type="primary">znuC</name>
    <name type="ordered locus">PSPPH_0264</name>
</gene>
<proteinExistence type="inferred from homology"/>
<accession>Q48PV0</accession>
<evidence type="ECO:0000255" key="1">
    <source>
        <dbReference type="HAMAP-Rule" id="MF_01725"/>
    </source>
</evidence>
<evidence type="ECO:0000256" key="2">
    <source>
        <dbReference type="SAM" id="MobiDB-lite"/>
    </source>
</evidence>
<dbReference type="EC" id="7.2.2.20" evidence="1"/>
<dbReference type="EMBL" id="CP000058">
    <property type="protein sequence ID" value="AAZ33771.1"/>
    <property type="molecule type" value="Genomic_DNA"/>
</dbReference>
<dbReference type="RefSeq" id="WP_004655231.1">
    <property type="nucleotide sequence ID" value="NC_005773.3"/>
</dbReference>
<dbReference type="SMR" id="Q48PV0"/>
<dbReference type="KEGG" id="psp:PSPPH_0264"/>
<dbReference type="eggNOG" id="COG1121">
    <property type="taxonomic scope" value="Bacteria"/>
</dbReference>
<dbReference type="HOGENOM" id="CLU_000604_1_11_6"/>
<dbReference type="Proteomes" id="UP000000551">
    <property type="component" value="Chromosome"/>
</dbReference>
<dbReference type="GO" id="GO:0005886">
    <property type="term" value="C:plasma membrane"/>
    <property type="evidence" value="ECO:0007669"/>
    <property type="project" value="UniProtKB-SubCell"/>
</dbReference>
<dbReference type="GO" id="GO:0015633">
    <property type="term" value="F:ABC-type zinc transporter activity"/>
    <property type="evidence" value="ECO:0007669"/>
    <property type="project" value="UniProtKB-EC"/>
</dbReference>
<dbReference type="GO" id="GO:0005524">
    <property type="term" value="F:ATP binding"/>
    <property type="evidence" value="ECO:0007669"/>
    <property type="project" value="UniProtKB-KW"/>
</dbReference>
<dbReference type="GO" id="GO:0016887">
    <property type="term" value="F:ATP hydrolysis activity"/>
    <property type="evidence" value="ECO:0007669"/>
    <property type="project" value="InterPro"/>
</dbReference>
<dbReference type="GO" id="GO:0010043">
    <property type="term" value="P:response to zinc ion"/>
    <property type="evidence" value="ECO:0007669"/>
    <property type="project" value="TreeGrafter"/>
</dbReference>
<dbReference type="CDD" id="cd03235">
    <property type="entry name" value="ABC_Metallic_Cations"/>
    <property type="match status" value="1"/>
</dbReference>
<dbReference type="FunFam" id="3.40.50.300:FF:000392">
    <property type="entry name" value="Zinc import ATP-binding protein ZnuC"/>
    <property type="match status" value="1"/>
</dbReference>
<dbReference type="Gene3D" id="3.40.50.300">
    <property type="entry name" value="P-loop containing nucleotide triphosphate hydrolases"/>
    <property type="match status" value="1"/>
</dbReference>
<dbReference type="InterPro" id="IPR003593">
    <property type="entry name" value="AAA+_ATPase"/>
</dbReference>
<dbReference type="InterPro" id="IPR003439">
    <property type="entry name" value="ABC_transporter-like_ATP-bd"/>
</dbReference>
<dbReference type="InterPro" id="IPR017871">
    <property type="entry name" value="ABC_transporter-like_CS"/>
</dbReference>
<dbReference type="InterPro" id="IPR050153">
    <property type="entry name" value="Metal_Ion_Import_ABC"/>
</dbReference>
<dbReference type="InterPro" id="IPR027417">
    <property type="entry name" value="P-loop_NTPase"/>
</dbReference>
<dbReference type="NCBIfam" id="NF007090">
    <property type="entry name" value="PRK09544.1"/>
    <property type="match status" value="1"/>
</dbReference>
<dbReference type="PANTHER" id="PTHR42734">
    <property type="entry name" value="METAL TRANSPORT SYSTEM ATP-BINDING PROTEIN TM_0124-RELATED"/>
    <property type="match status" value="1"/>
</dbReference>
<dbReference type="PANTHER" id="PTHR42734:SF9">
    <property type="entry name" value="ZINC IMPORT ATP-BINDING PROTEIN ZNUC"/>
    <property type="match status" value="1"/>
</dbReference>
<dbReference type="Pfam" id="PF00005">
    <property type="entry name" value="ABC_tran"/>
    <property type="match status" value="1"/>
</dbReference>
<dbReference type="SMART" id="SM00382">
    <property type="entry name" value="AAA"/>
    <property type="match status" value="1"/>
</dbReference>
<dbReference type="SUPFAM" id="SSF52540">
    <property type="entry name" value="P-loop containing nucleoside triphosphate hydrolases"/>
    <property type="match status" value="1"/>
</dbReference>
<dbReference type="PROSITE" id="PS00211">
    <property type="entry name" value="ABC_TRANSPORTER_1"/>
    <property type="match status" value="1"/>
</dbReference>
<dbReference type="PROSITE" id="PS50893">
    <property type="entry name" value="ABC_TRANSPORTER_2"/>
    <property type="match status" value="1"/>
</dbReference>
<dbReference type="PROSITE" id="PS51298">
    <property type="entry name" value="ZNUC"/>
    <property type="match status" value="1"/>
</dbReference>
<organism>
    <name type="scientific">Pseudomonas savastanoi pv. phaseolicola (strain 1448A / Race 6)</name>
    <name type="common">Pseudomonas syringae pv. phaseolicola (strain 1448A / Race 6)</name>
    <dbReference type="NCBI Taxonomy" id="264730"/>
    <lineage>
        <taxon>Bacteria</taxon>
        <taxon>Pseudomonadati</taxon>
        <taxon>Pseudomonadota</taxon>
        <taxon>Gammaproteobacteria</taxon>
        <taxon>Pseudomonadales</taxon>
        <taxon>Pseudomonadaceae</taxon>
        <taxon>Pseudomonas</taxon>
    </lineage>
</organism>
<feature type="chain" id="PRO_0000281530" description="Zinc import ATP-binding protein ZnuC">
    <location>
        <begin position="1"/>
        <end position="265"/>
    </location>
</feature>
<feature type="domain" description="ABC transporter" evidence="1">
    <location>
        <begin position="6"/>
        <end position="221"/>
    </location>
</feature>
<feature type="region of interest" description="Disordered" evidence="2">
    <location>
        <begin position="245"/>
        <end position="265"/>
    </location>
</feature>
<feature type="binding site" evidence="1">
    <location>
        <begin position="38"/>
        <end position="45"/>
    </location>
    <ligand>
        <name>ATP</name>
        <dbReference type="ChEBI" id="CHEBI:30616"/>
    </ligand>
</feature>
<comment type="function">
    <text evidence="1">Part of the ABC transporter complex ZnuABC involved in zinc import. Responsible for energy coupling to the transport system.</text>
</comment>
<comment type="catalytic activity">
    <reaction evidence="1">
        <text>Zn(2+)(out) + ATP(in) + H2O(in) = Zn(2+)(in) + ADP(in) + phosphate(in) + H(+)(in)</text>
        <dbReference type="Rhea" id="RHEA:29795"/>
        <dbReference type="ChEBI" id="CHEBI:15377"/>
        <dbReference type="ChEBI" id="CHEBI:15378"/>
        <dbReference type="ChEBI" id="CHEBI:29105"/>
        <dbReference type="ChEBI" id="CHEBI:30616"/>
        <dbReference type="ChEBI" id="CHEBI:43474"/>
        <dbReference type="ChEBI" id="CHEBI:456216"/>
        <dbReference type="EC" id="7.2.2.20"/>
    </reaction>
</comment>
<comment type="subunit">
    <text evidence="1">The complex is composed of two ATP-binding proteins (ZnuC), two transmembrane proteins (ZnuB) and a solute-binding protein (ZnuA).</text>
</comment>
<comment type="subcellular location">
    <subcellularLocation>
        <location evidence="1">Cell inner membrane</location>
        <topology evidence="1">Peripheral membrane protein</topology>
    </subcellularLocation>
</comment>
<comment type="similarity">
    <text evidence="1">Belongs to the ABC transporter superfamily. Zinc importer (TC 3.A.1.15.5) family.</text>
</comment>